<feature type="chain" id="PRO_0000145859" description="Phosphoglycerate kinase">
    <location>
        <begin position="1"/>
        <end position="416"/>
    </location>
</feature>
<feature type="binding site" evidence="1">
    <location>
        <position position="23"/>
    </location>
    <ligand>
        <name>(2R)-3-phosphoglycerate</name>
        <dbReference type="ChEBI" id="CHEBI:58272"/>
    </ligand>
</feature>
<feature type="binding site" evidence="2">
    <location>
        <position position="24"/>
    </location>
    <ligand>
        <name>(2R)-3-phosphoglycerate</name>
        <dbReference type="ChEBI" id="CHEBI:58272"/>
    </ligand>
</feature>
<feature type="binding site" evidence="1">
    <location>
        <position position="25"/>
    </location>
    <ligand>
        <name>(2R)-3-phosphoglycerate</name>
        <dbReference type="ChEBI" id="CHEBI:58272"/>
    </ligand>
</feature>
<feature type="binding site" evidence="2">
    <location>
        <position position="26"/>
    </location>
    <ligand>
        <name>(2R)-3-phosphoglycerate</name>
        <dbReference type="ChEBI" id="CHEBI:58272"/>
    </ligand>
</feature>
<feature type="binding site" evidence="1">
    <location>
        <position position="38"/>
    </location>
    <ligand>
        <name>(2R)-3-phosphoglycerate</name>
        <dbReference type="ChEBI" id="CHEBI:58272"/>
    </ligand>
</feature>
<feature type="binding site" evidence="2">
    <location>
        <position position="39"/>
    </location>
    <ligand>
        <name>(2R)-3-phosphoglycerate</name>
        <dbReference type="ChEBI" id="CHEBI:58272"/>
    </ligand>
</feature>
<feature type="binding site" evidence="1">
    <location>
        <position position="62"/>
    </location>
    <ligand>
        <name>(2R)-3-phosphoglycerate</name>
        <dbReference type="ChEBI" id="CHEBI:58272"/>
    </ligand>
</feature>
<feature type="binding site" evidence="2">
    <location>
        <position position="63"/>
    </location>
    <ligand>
        <name>(2R)-3-phosphoglycerate</name>
        <dbReference type="ChEBI" id="CHEBI:58272"/>
    </ligand>
</feature>
<feature type="binding site" evidence="1">
    <location>
        <position position="65"/>
    </location>
    <ligand>
        <name>(2R)-3-phosphoglycerate</name>
        <dbReference type="ChEBI" id="CHEBI:58272"/>
    </ligand>
</feature>
<feature type="binding site" evidence="2">
    <location>
        <position position="66"/>
    </location>
    <ligand>
        <name>(2R)-3-phosphoglycerate</name>
        <dbReference type="ChEBI" id="CHEBI:58272"/>
    </ligand>
</feature>
<feature type="binding site" evidence="1">
    <location>
        <position position="121"/>
    </location>
    <ligand>
        <name>(2R)-3-phosphoglycerate</name>
        <dbReference type="ChEBI" id="CHEBI:58272"/>
    </ligand>
</feature>
<feature type="binding site" evidence="2">
    <location>
        <position position="122"/>
    </location>
    <ligand>
        <name>(2R)-3-phosphoglycerate</name>
        <dbReference type="ChEBI" id="CHEBI:58272"/>
    </ligand>
</feature>
<feature type="binding site" evidence="1">
    <location>
        <position position="169"/>
    </location>
    <ligand>
        <name>(2R)-3-phosphoglycerate</name>
        <dbReference type="ChEBI" id="CHEBI:58272"/>
    </ligand>
</feature>
<feature type="binding site" evidence="2">
    <location>
        <position position="170"/>
    </location>
    <ligand>
        <name>(2R)-3-phosphoglycerate</name>
        <dbReference type="ChEBI" id="CHEBI:58272"/>
    </ligand>
</feature>
<feature type="binding site" evidence="1">
    <location>
        <position position="213"/>
    </location>
    <ligand>
        <name>ADP</name>
        <dbReference type="ChEBI" id="CHEBI:456216"/>
    </ligand>
</feature>
<feature type="binding site" evidence="1">
    <location>
        <position position="213"/>
    </location>
    <ligand>
        <name>CDP</name>
        <dbReference type="ChEBI" id="CHEBI:58069"/>
    </ligand>
</feature>
<feature type="binding site" evidence="2">
    <location>
        <position position="214"/>
    </location>
    <ligand>
        <name>AMP</name>
        <dbReference type="ChEBI" id="CHEBI:456215"/>
    </ligand>
</feature>
<feature type="binding site" evidence="2">
    <location>
        <position position="214"/>
    </location>
    <ligand>
        <name>ATP</name>
        <dbReference type="ChEBI" id="CHEBI:30616"/>
    </ligand>
</feature>
<feature type="binding site" evidence="1">
    <location>
        <position position="214"/>
    </location>
    <ligand>
        <name>Mg(2+)</name>
        <dbReference type="ChEBI" id="CHEBI:18420"/>
    </ligand>
</feature>
<feature type="binding site" evidence="2">
    <location>
        <position position="215"/>
    </location>
    <ligand>
        <name>AMP</name>
        <dbReference type="ChEBI" id="CHEBI:456215"/>
    </ligand>
</feature>
<feature type="binding site">
    <location>
        <position position="215"/>
    </location>
    <ligand>
        <name>ATP</name>
        <dbReference type="ChEBI" id="CHEBI:30616"/>
    </ligand>
</feature>
<feature type="binding site" evidence="1">
    <location>
        <position position="218"/>
    </location>
    <ligand>
        <name>CDP</name>
        <dbReference type="ChEBI" id="CHEBI:58069"/>
    </ligand>
</feature>
<feature type="binding site" evidence="1">
    <location>
        <position position="218"/>
    </location>
    <ligand>
        <name>Mg(2+)</name>
        <dbReference type="ChEBI" id="CHEBI:18420"/>
    </ligand>
</feature>
<feature type="binding site" evidence="2">
    <location>
        <position position="219"/>
    </location>
    <ligand>
        <name>AMP</name>
        <dbReference type="ChEBI" id="CHEBI:456215"/>
    </ligand>
</feature>
<feature type="binding site" evidence="2">
    <location>
        <position position="219"/>
    </location>
    <ligand>
        <name>ATP</name>
        <dbReference type="ChEBI" id="CHEBI:30616"/>
    </ligand>
</feature>
<feature type="binding site" evidence="1">
    <location>
        <position position="237"/>
    </location>
    <ligand>
        <name>ADP</name>
        <dbReference type="ChEBI" id="CHEBI:456216"/>
    </ligand>
</feature>
<feature type="binding site" evidence="1">
    <location>
        <position position="237"/>
    </location>
    <ligand>
        <name>CDP</name>
        <dbReference type="ChEBI" id="CHEBI:58069"/>
    </ligand>
</feature>
<feature type="binding site" evidence="2">
    <location>
        <position position="238"/>
    </location>
    <ligand>
        <name>AMP</name>
        <dbReference type="ChEBI" id="CHEBI:456215"/>
    </ligand>
</feature>
<feature type="binding site" evidence="2">
    <location>
        <position position="238"/>
    </location>
    <ligand>
        <name>ATP</name>
        <dbReference type="ChEBI" id="CHEBI:30616"/>
    </ligand>
</feature>
<feature type="binding site" evidence="2">
    <location>
        <position position="312"/>
    </location>
    <ligand>
        <name>AMP</name>
        <dbReference type="ChEBI" id="CHEBI:456215"/>
    </ligand>
</feature>
<feature type="binding site" evidence="2">
    <location>
        <position position="312"/>
    </location>
    <ligand>
        <name>ATP</name>
        <dbReference type="ChEBI" id="CHEBI:30616"/>
    </ligand>
</feature>
<feature type="binding site" evidence="1">
    <location>
        <position position="337"/>
    </location>
    <ligand>
        <name>CDP</name>
        <dbReference type="ChEBI" id="CHEBI:58069"/>
    </ligand>
</feature>
<feature type="binding site" evidence="1">
    <location>
        <position position="342"/>
    </location>
    <ligand>
        <name>ADP</name>
        <dbReference type="ChEBI" id="CHEBI:456216"/>
    </ligand>
</feature>
<feature type="binding site" evidence="1">
    <location>
        <position position="342"/>
    </location>
    <ligand>
        <name>CDP</name>
        <dbReference type="ChEBI" id="CHEBI:58069"/>
    </ligand>
</feature>
<feature type="binding site" evidence="2">
    <location>
        <position position="343"/>
    </location>
    <ligand>
        <name>AMP</name>
        <dbReference type="ChEBI" id="CHEBI:456215"/>
    </ligand>
</feature>
<feature type="binding site" evidence="2">
    <location>
        <position position="374"/>
    </location>
    <ligand>
        <name>Mg(2+)</name>
        <dbReference type="ChEBI" id="CHEBI:18420"/>
    </ligand>
</feature>
<feature type="binding site" evidence="2">
    <location>
        <position position="375"/>
    </location>
    <ligand>
        <name>ATP</name>
        <dbReference type="ChEBI" id="CHEBI:30616"/>
    </ligand>
</feature>
<feature type="strand" evidence="5">
    <location>
        <begin position="2"/>
        <end position="4"/>
    </location>
</feature>
<feature type="helix" evidence="6">
    <location>
        <begin position="8"/>
        <end position="10"/>
    </location>
</feature>
<feature type="strand" evidence="6">
    <location>
        <begin position="18"/>
        <end position="22"/>
    </location>
</feature>
<feature type="strand" evidence="6">
    <location>
        <begin position="33"/>
        <end position="35"/>
    </location>
</feature>
<feature type="helix" evidence="6">
    <location>
        <begin position="38"/>
        <end position="41"/>
    </location>
</feature>
<feature type="helix" evidence="6">
    <location>
        <begin position="44"/>
        <end position="53"/>
    </location>
</feature>
<feature type="strand" evidence="6">
    <location>
        <begin position="56"/>
        <end position="61"/>
    </location>
</feature>
<feature type="helix" evidence="6">
    <location>
        <begin position="73"/>
        <end position="75"/>
    </location>
</feature>
<feature type="helix" evidence="6">
    <location>
        <begin position="78"/>
        <end position="88"/>
    </location>
</feature>
<feature type="strand" evidence="6">
    <location>
        <begin position="93"/>
        <end position="96"/>
    </location>
</feature>
<feature type="strand" evidence="6">
    <location>
        <begin position="98"/>
        <end position="100"/>
    </location>
</feature>
<feature type="helix" evidence="6">
    <location>
        <begin position="101"/>
        <end position="109"/>
    </location>
</feature>
<feature type="strand" evidence="6">
    <location>
        <begin position="114"/>
        <end position="118"/>
    </location>
</feature>
<feature type="helix" evidence="6">
    <location>
        <begin position="121"/>
        <end position="123"/>
    </location>
</feature>
<feature type="turn" evidence="6">
    <location>
        <begin position="125"/>
        <end position="128"/>
    </location>
</feature>
<feature type="strand" evidence="6">
    <location>
        <begin position="129"/>
        <end position="132"/>
    </location>
</feature>
<feature type="strand" evidence="6">
    <location>
        <begin position="138"/>
        <end position="140"/>
    </location>
</feature>
<feature type="helix" evidence="6">
    <location>
        <begin position="143"/>
        <end position="154"/>
    </location>
</feature>
<feature type="strand" evidence="6">
    <location>
        <begin position="158"/>
        <end position="162"/>
    </location>
</feature>
<feature type="helix" evidence="6">
    <location>
        <begin position="165"/>
        <end position="167"/>
    </location>
</feature>
<feature type="helix" evidence="6">
    <location>
        <begin position="173"/>
        <end position="176"/>
    </location>
</feature>
<feature type="strand" evidence="6">
    <location>
        <begin position="183"/>
        <end position="185"/>
    </location>
</feature>
<feature type="helix" evidence="6">
    <location>
        <begin position="187"/>
        <end position="200"/>
    </location>
</feature>
<feature type="strand" evidence="6">
    <location>
        <begin position="205"/>
        <end position="212"/>
    </location>
</feature>
<feature type="helix" evidence="5">
    <location>
        <begin position="217"/>
        <end position="219"/>
    </location>
</feature>
<feature type="helix" evidence="6">
    <location>
        <begin position="220"/>
        <end position="227"/>
    </location>
</feature>
<feature type="strand" evidence="6">
    <location>
        <begin position="231"/>
        <end position="236"/>
    </location>
</feature>
<feature type="helix" evidence="6">
    <location>
        <begin position="239"/>
        <end position="248"/>
    </location>
</feature>
<feature type="turn" evidence="6">
    <location>
        <begin position="259"/>
        <end position="261"/>
    </location>
</feature>
<feature type="helix" evidence="6">
    <location>
        <begin position="262"/>
        <end position="274"/>
    </location>
</feature>
<feature type="strand" evidence="6">
    <location>
        <begin position="278"/>
        <end position="280"/>
    </location>
</feature>
<feature type="strand" evidence="6">
    <location>
        <begin position="283"/>
        <end position="292"/>
    </location>
</feature>
<feature type="strand" evidence="6">
    <location>
        <begin position="297"/>
        <end position="304"/>
    </location>
</feature>
<feature type="strand" evidence="6">
    <location>
        <begin position="311"/>
        <end position="315"/>
    </location>
</feature>
<feature type="helix" evidence="6">
    <location>
        <begin position="317"/>
        <end position="328"/>
    </location>
</feature>
<feature type="strand" evidence="6">
    <location>
        <begin position="331"/>
        <end position="337"/>
    </location>
</feature>
<feature type="helix" evidence="5">
    <location>
        <begin position="345"/>
        <end position="347"/>
    </location>
</feature>
<feature type="helix" evidence="6">
    <location>
        <begin position="349"/>
        <end position="364"/>
    </location>
</feature>
<feature type="strand" evidence="6">
    <location>
        <begin position="367"/>
        <end position="370"/>
    </location>
</feature>
<feature type="helix" evidence="6">
    <location>
        <begin position="373"/>
        <end position="381"/>
    </location>
</feature>
<feature type="helix" evidence="6">
    <location>
        <begin position="385"/>
        <end position="387"/>
    </location>
</feature>
<feature type="strand" evidence="6">
    <location>
        <begin position="388"/>
        <end position="391"/>
    </location>
</feature>
<feature type="helix" evidence="6">
    <location>
        <begin position="396"/>
        <end position="402"/>
    </location>
</feature>
<feature type="helix" evidence="6">
    <location>
        <begin position="408"/>
        <end position="411"/>
    </location>
</feature>
<proteinExistence type="evidence at protein level"/>
<gene>
    <name type="primary">PGK</name>
    <name type="ORF">PFI1105w</name>
</gene>
<comment type="catalytic activity">
    <reaction evidence="1">
        <text>(2R)-3-phosphoglycerate + ATP = (2R)-3-phospho-glyceroyl phosphate + ADP</text>
        <dbReference type="Rhea" id="RHEA:14801"/>
        <dbReference type="ChEBI" id="CHEBI:30616"/>
        <dbReference type="ChEBI" id="CHEBI:57604"/>
        <dbReference type="ChEBI" id="CHEBI:58272"/>
        <dbReference type="ChEBI" id="CHEBI:456216"/>
        <dbReference type="EC" id="2.7.2.3"/>
    </reaction>
</comment>
<comment type="cofactor">
    <cofactor evidence="1">
        <name>Mg(2+)</name>
        <dbReference type="ChEBI" id="CHEBI:18420"/>
    </cofactor>
</comment>
<comment type="pathway">
    <text>Carbohydrate degradation; glycolysis; pyruvate from D-glyceraldehyde 3-phosphate: step 2/5.</text>
</comment>
<comment type="subunit">
    <text evidence="3">Monomer.</text>
</comment>
<comment type="similarity">
    <text evidence="4">Belongs to the phosphoglycerate kinase family.</text>
</comment>
<protein>
    <recommendedName>
        <fullName>Phosphoglycerate kinase</fullName>
        <ecNumber evidence="1">2.7.2.3</ecNumber>
    </recommendedName>
</protein>
<reference key="1">
    <citation type="journal article" date="1991" name="Gene">
        <title>Glycolytic pathway of the human malaria parasite Plasmodium falciparum: primary sequence analysis of the gene encoding 3-phosphoglycerate kinase and chromosomal mapping studies.</title>
        <authorList>
            <person name="Hicks K.E."/>
            <person name="Read M."/>
            <person name="Holloway S.P."/>
            <person name="Sims P.F.G."/>
            <person name="Hyde J.E."/>
        </authorList>
    </citation>
    <scope>NUCLEOTIDE SEQUENCE [GENOMIC DNA]</scope>
</reference>
<reference key="2">
    <citation type="journal article" date="2002" name="Nature">
        <title>Genome sequence of the human malaria parasite Plasmodium falciparum.</title>
        <authorList>
            <person name="Gardner M.J."/>
            <person name="Hall N."/>
            <person name="Fung E."/>
            <person name="White O."/>
            <person name="Berriman M."/>
            <person name="Hyman R.W."/>
            <person name="Carlton J.M."/>
            <person name="Pain A."/>
            <person name="Nelson K.E."/>
            <person name="Bowman S."/>
            <person name="Paulsen I.T."/>
            <person name="James K.D."/>
            <person name="Eisen J.A."/>
            <person name="Rutherford K.M."/>
            <person name="Salzberg S.L."/>
            <person name="Craig A."/>
            <person name="Kyes S."/>
            <person name="Chan M.-S."/>
            <person name="Nene V."/>
            <person name="Shallom S.J."/>
            <person name="Suh B."/>
            <person name="Peterson J."/>
            <person name="Angiuoli S."/>
            <person name="Pertea M."/>
            <person name="Allen J."/>
            <person name="Selengut J."/>
            <person name="Haft D."/>
            <person name="Mather M.W."/>
            <person name="Vaidya A.B."/>
            <person name="Martin D.M.A."/>
            <person name="Fairlamb A.H."/>
            <person name="Fraunholz M.J."/>
            <person name="Roos D.S."/>
            <person name="Ralph S.A."/>
            <person name="McFadden G.I."/>
            <person name="Cummings L.M."/>
            <person name="Subramanian G.M."/>
            <person name="Mungall C."/>
            <person name="Venter J.C."/>
            <person name="Carucci D.J."/>
            <person name="Hoffman S.L."/>
            <person name="Newbold C."/>
            <person name="Davis R.W."/>
            <person name="Fraser C.M."/>
            <person name="Barrell B.G."/>
        </authorList>
    </citation>
    <scope>NUCLEOTIDE SEQUENCE [LARGE SCALE GENOMIC DNA]</scope>
    <source>
        <strain>3D7</strain>
    </source>
</reference>
<reference key="3">
    <citation type="journal article" date="2002" name="Nature">
        <title>Sequence of Plasmodium falciparum chromosomes 1, 3-9 and 13.</title>
        <authorList>
            <person name="Hall N."/>
            <person name="Pain A."/>
            <person name="Berriman M."/>
            <person name="Churcher C.M."/>
            <person name="Harris B."/>
            <person name="Harris D."/>
            <person name="Mungall K.L."/>
            <person name="Bowman S."/>
            <person name="Atkin R."/>
            <person name="Baker S."/>
            <person name="Barron A."/>
            <person name="Brooks K."/>
            <person name="Buckee C.O."/>
            <person name="Burrows C."/>
            <person name="Cherevach I."/>
            <person name="Chillingworth C."/>
            <person name="Chillingworth T."/>
            <person name="Christodoulou Z."/>
            <person name="Clark L."/>
            <person name="Clark R."/>
            <person name="Corton C."/>
            <person name="Cronin A."/>
            <person name="Davies R.M."/>
            <person name="Davis P."/>
            <person name="Dear P."/>
            <person name="Dearden F."/>
            <person name="Doggett J."/>
            <person name="Feltwell T."/>
            <person name="Goble A."/>
            <person name="Goodhead I."/>
            <person name="Gwilliam R."/>
            <person name="Hamlin N."/>
            <person name="Hance Z."/>
            <person name="Harper D."/>
            <person name="Hauser H."/>
            <person name="Hornsby T."/>
            <person name="Holroyd S."/>
            <person name="Horrocks P."/>
            <person name="Humphray S."/>
            <person name="Jagels K."/>
            <person name="James K.D."/>
            <person name="Johnson D."/>
            <person name="Kerhornou A."/>
            <person name="Knights A."/>
            <person name="Konfortov B."/>
            <person name="Kyes S."/>
            <person name="Larke N."/>
            <person name="Lawson D."/>
            <person name="Lennard N."/>
            <person name="Line A."/>
            <person name="Maddison M."/>
            <person name="Mclean J."/>
            <person name="Mooney P."/>
            <person name="Moule S."/>
            <person name="Murphy L."/>
            <person name="Oliver K."/>
            <person name="Ormond D."/>
            <person name="Price C."/>
            <person name="Quail M.A."/>
            <person name="Rabbinowitsch E."/>
            <person name="Rajandream M.A."/>
            <person name="Rutter S."/>
            <person name="Rutherford K.M."/>
            <person name="Sanders M."/>
            <person name="Simmonds M."/>
            <person name="Seeger K."/>
            <person name="Sharp S."/>
            <person name="Smith R."/>
            <person name="Squares R."/>
            <person name="Squares S."/>
            <person name="Stevens K."/>
            <person name="Taylor K."/>
            <person name="Tivey A."/>
            <person name="Unwin L."/>
            <person name="Whitehead S."/>
            <person name="Woodward J.R."/>
            <person name="Sulston J.E."/>
            <person name="Craig A."/>
            <person name="Newbold C."/>
            <person name="Barrell B.G."/>
        </authorList>
    </citation>
    <scope>NUCLEOTIDE SEQUENCE [LARGE SCALE GENOMIC DNA]</scope>
    <source>
        <strain>3D7</strain>
    </source>
</reference>
<reference key="4">
    <citation type="journal article" date="2004" name="Biochim. Biophys. Acta">
        <title>Biochemical characterization and crystallization of recombinant 3-phosphoglycerate kinase of Plasmodium falciparum.</title>
        <authorList>
            <person name="Pal B."/>
            <person name="Pybus B."/>
            <person name="Muccio D.D."/>
            <person name="Chattopadhyay D."/>
        </authorList>
    </citation>
    <scope>X-RAY CRYSTALLOGRAPHY (3.0 ANGSTROMS) OF 2-416 IN COMPLEX WITH AMP</scope>
</reference>
<accession>P27362</accession>
<name>PGK_PLAF7</name>
<sequence length="416" mass="45427">MLGNKLSISDLKDIKNKKVLVRVDFNVPIENGIIKDTNRITATLPTINHLKKEGASKIILISHCGRPDGLRNEKYTLKPVAETLKGLLGEEVLFLNDCVGKEVEDKINAAKENSVILLENLRFHIEEEGKGVDANGNKVKANKEDVEKFQNDLTKLADVFINDAFGTAHRAHSSMVGVKLNVKASGFLMKKELEYFSKALENPQRPLLAILGGAKVSDKIQLIKNLLDKVDRMIIGGGMAYTFKKVLNNMKIGTSLFDEAGSKIVGEIMEKAKAKNVQIFLPVDFKIADNFDNNANTKFVTDEEGIPDNWMGLDAGPKSIENYKDVILTSKTVIWNGPQGVFEMPNFAKGSIECLNLVVEVTKKGAITIVGGGDTASLVEQQNKKNEISHVSTGGGASLELLEGKELPGVLALSNK</sequence>
<organism>
    <name type="scientific">Plasmodium falciparum (isolate 3D7)</name>
    <dbReference type="NCBI Taxonomy" id="36329"/>
    <lineage>
        <taxon>Eukaryota</taxon>
        <taxon>Sar</taxon>
        <taxon>Alveolata</taxon>
        <taxon>Apicomplexa</taxon>
        <taxon>Aconoidasida</taxon>
        <taxon>Haemosporida</taxon>
        <taxon>Plasmodiidae</taxon>
        <taxon>Plasmodium</taxon>
        <taxon>Plasmodium (Laverania)</taxon>
    </lineage>
</organism>
<keyword id="KW-0002">3D-structure</keyword>
<keyword id="KW-0067">ATP-binding</keyword>
<keyword id="KW-0324">Glycolysis</keyword>
<keyword id="KW-0418">Kinase</keyword>
<keyword id="KW-0460">Magnesium</keyword>
<keyword id="KW-0479">Metal-binding</keyword>
<keyword id="KW-0547">Nucleotide-binding</keyword>
<keyword id="KW-1185">Reference proteome</keyword>
<keyword id="KW-0808">Transferase</keyword>
<dbReference type="EC" id="2.7.2.3" evidence="1"/>
<dbReference type="EMBL" id="M59249">
    <property type="protein sequence ID" value="AAA29727.1"/>
    <property type="molecule type" value="Genomic_DNA"/>
</dbReference>
<dbReference type="EMBL" id="AL844508">
    <property type="protein sequence ID" value="CAD51907.1"/>
    <property type="molecule type" value="Genomic_DNA"/>
</dbReference>
<dbReference type="PIR" id="JU0475">
    <property type="entry name" value="JU0475"/>
</dbReference>
<dbReference type="RefSeq" id="XP_001352096.1">
    <property type="nucleotide sequence ID" value="XM_001352060.1"/>
</dbReference>
<dbReference type="PDB" id="1LTK">
    <property type="method" value="X-ray"/>
    <property type="resolution" value="3.00 A"/>
    <property type="chains" value="A/B/C=2-416"/>
</dbReference>
<dbReference type="PDB" id="3OZ7">
    <property type="method" value="X-ray"/>
    <property type="resolution" value="2.70 A"/>
    <property type="chains" value="A/B=2-415"/>
</dbReference>
<dbReference type="PDB" id="3OZA">
    <property type="method" value="X-ray"/>
    <property type="resolution" value="3.00 A"/>
    <property type="chains" value="A/B/C=2-416"/>
</dbReference>
<dbReference type="PDBsum" id="1LTK"/>
<dbReference type="PDBsum" id="3OZ7"/>
<dbReference type="PDBsum" id="3OZA"/>
<dbReference type="SMR" id="P27362"/>
<dbReference type="BioGRID" id="1208777">
    <property type="interactions" value="3"/>
</dbReference>
<dbReference type="FunCoup" id="P27362">
    <property type="interactions" value="113"/>
</dbReference>
<dbReference type="IntAct" id="P27362">
    <property type="interactions" value="3"/>
</dbReference>
<dbReference type="STRING" id="36329.P27362"/>
<dbReference type="SwissPalm" id="P27362"/>
<dbReference type="PaxDb" id="5833-PFI1105w"/>
<dbReference type="EnsemblProtists" id="CAD51907">
    <property type="protein sequence ID" value="CAD51907"/>
    <property type="gene ID" value="PF3D7_0922500"/>
</dbReference>
<dbReference type="KEGG" id="pfa:PF3D7_0922500"/>
<dbReference type="VEuPathDB" id="PlasmoDB:PF3D7_0922500"/>
<dbReference type="HOGENOM" id="CLU_025427_0_0_1"/>
<dbReference type="InParanoid" id="P27362"/>
<dbReference type="OMA" id="DMIFDIG"/>
<dbReference type="OrthoDB" id="275353at2759"/>
<dbReference type="PhylomeDB" id="P27362"/>
<dbReference type="BRENDA" id="2.7.2.3">
    <property type="organism ID" value="4889"/>
</dbReference>
<dbReference type="Reactome" id="R-PFA-70171">
    <property type="pathway name" value="Glycolysis"/>
</dbReference>
<dbReference type="Reactome" id="R-PFA-70263">
    <property type="pathway name" value="Gluconeogenesis"/>
</dbReference>
<dbReference type="UniPathway" id="UPA00109">
    <property type="reaction ID" value="UER00185"/>
</dbReference>
<dbReference type="EvolutionaryTrace" id="P27362"/>
<dbReference type="Proteomes" id="UP000001450">
    <property type="component" value="Chromosome 9"/>
</dbReference>
<dbReference type="GO" id="GO:0005829">
    <property type="term" value="C:cytosol"/>
    <property type="evidence" value="ECO:0000318"/>
    <property type="project" value="GO_Central"/>
</dbReference>
<dbReference type="GO" id="GO:0043531">
    <property type="term" value="F:ADP binding"/>
    <property type="evidence" value="ECO:0000318"/>
    <property type="project" value="GO_Central"/>
</dbReference>
<dbReference type="GO" id="GO:0005524">
    <property type="term" value="F:ATP binding"/>
    <property type="evidence" value="ECO:0000318"/>
    <property type="project" value="GO_Central"/>
</dbReference>
<dbReference type="GO" id="GO:0046872">
    <property type="term" value="F:metal ion binding"/>
    <property type="evidence" value="ECO:0007669"/>
    <property type="project" value="UniProtKB-KW"/>
</dbReference>
<dbReference type="GO" id="GO:0004618">
    <property type="term" value="F:phosphoglycerate kinase activity"/>
    <property type="evidence" value="ECO:0000318"/>
    <property type="project" value="GO_Central"/>
</dbReference>
<dbReference type="GO" id="GO:0006094">
    <property type="term" value="P:gluconeogenesis"/>
    <property type="evidence" value="ECO:0000318"/>
    <property type="project" value="GO_Central"/>
</dbReference>
<dbReference type="GO" id="GO:0006096">
    <property type="term" value="P:glycolytic process"/>
    <property type="evidence" value="ECO:0000318"/>
    <property type="project" value="GO_Central"/>
</dbReference>
<dbReference type="CDD" id="cd00318">
    <property type="entry name" value="Phosphoglycerate_kinase"/>
    <property type="match status" value="1"/>
</dbReference>
<dbReference type="FunFam" id="3.40.50.1260:FF:000003">
    <property type="entry name" value="Phosphoglycerate kinase"/>
    <property type="match status" value="1"/>
</dbReference>
<dbReference type="FunFam" id="3.40.50.1260:FF:000019">
    <property type="entry name" value="Phosphoglycerate kinase 1"/>
    <property type="match status" value="1"/>
</dbReference>
<dbReference type="Gene3D" id="3.40.50.1260">
    <property type="entry name" value="Phosphoglycerate kinase, N-terminal domain"/>
    <property type="match status" value="3"/>
</dbReference>
<dbReference type="HAMAP" id="MF_00145">
    <property type="entry name" value="Phosphoglyc_kinase"/>
    <property type="match status" value="1"/>
</dbReference>
<dbReference type="InterPro" id="IPR001576">
    <property type="entry name" value="Phosphoglycerate_kinase"/>
</dbReference>
<dbReference type="InterPro" id="IPR015911">
    <property type="entry name" value="Phosphoglycerate_kinase_CS"/>
</dbReference>
<dbReference type="InterPro" id="IPR015824">
    <property type="entry name" value="Phosphoglycerate_kinase_N"/>
</dbReference>
<dbReference type="InterPro" id="IPR036043">
    <property type="entry name" value="Phosphoglycerate_kinase_sf"/>
</dbReference>
<dbReference type="PANTHER" id="PTHR11406">
    <property type="entry name" value="PHOSPHOGLYCERATE KINASE"/>
    <property type="match status" value="1"/>
</dbReference>
<dbReference type="PANTHER" id="PTHR11406:SF0">
    <property type="entry name" value="PHOSPHOGLYCERATE KINASE"/>
    <property type="match status" value="1"/>
</dbReference>
<dbReference type="Pfam" id="PF00162">
    <property type="entry name" value="PGK"/>
    <property type="match status" value="1"/>
</dbReference>
<dbReference type="PIRSF" id="PIRSF000724">
    <property type="entry name" value="Pgk"/>
    <property type="match status" value="1"/>
</dbReference>
<dbReference type="PRINTS" id="PR00477">
    <property type="entry name" value="PHGLYCKINASE"/>
</dbReference>
<dbReference type="SUPFAM" id="SSF53748">
    <property type="entry name" value="Phosphoglycerate kinase"/>
    <property type="match status" value="1"/>
</dbReference>
<dbReference type="PROSITE" id="PS00111">
    <property type="entry name" value="PGLYCERATE_KINASE"/>
    <property type="match status" value="1"/>
</dbReference>
<evidence type="ECO:0000250" key="1">
    <source>
        <dbReference type="UniProtKB" id="P00558"/>
    </source>
</evidence>
<evidence type="ECO:0000250" key="2">
    <source>
        <dbReference type="UniProtKB" id="Q7SIB7"/>
    </source>
</evidence>
<evidence type="ECO:0000269" key="3">
    <source>
    </source>
</evidence>
<evidence type="ECO:0000305" key="4"/>
<evidence type="ECO:0007829" key="5">
    <source>
        <dbReference type="PDB" id="1LTK"/>
    </source>
</evidence>
<evidence type="ECO:0007829" key="6">
    <source>
        <dbReference type="PDB" id="3OZ7"/>
    </source>
</evidence>